<accession>K4REZ6</accession>
<protein>
    <recommendedName>
        <fullName evidence="4">8-demethyl-8-aminoriboflavin-5'-phosphate synthase</fullName>
        <shortName evidence="4">AFP synthase</shortName>
        <ecNumber evidence="1 3 7">2.6.1.114</ecNumber>
    </recommendedName>
    <alternativeName>
        <fullName evidence="5">8-amino-flavin synthase</fullName>
    </alternativeName>
</protein>
<gene>
    <name evidence="4" type="primary">rosB</name>
    <name evidence="5" type="synonym">Orf7989</name>
    <name evidence="8" type="ORF">BN159_7989</name>
</gene>
<evidence type="ECO:0000269" key="1">
    <source>
    </source>
</evidence>
<evidence type="ECO:0000269" key="2">
    <source>
    </source>
</evidence>
<evidence type="ECO:0000269" key="3">
    <source>
    </source>
</evidence>
<evidence type="ECO:0000303" key="4">
    <source>
    </source>
</evidence>
<evidence type="ECO:0000303" key="5">
    <source>
    </source>
</evidence>
<evidence type="ECO:0000305" key="6"/>
<evidence type="ECO:0000305" key="7">
    <source>
    </source>
</evidence>
<evidence type="ECO:0000312" key="8">
    <source>
        <dbReference type="EMBL" id="CCK32368.1"/>
    </source>
</evidence>
<evidence type="ECO:0007744" key="9">
    <source>
        <dbReference type="PDB" id="5MJI"/>
    </source>
</evidence>
<evidence type="ECO:0007744" key="10">
    <source>
        <dbReference type="PDB" id="5MLD"/>
    </source>
</evidence>
<evidence type="ECO:0007829" key="11">
    <source>
        <dbReference type="PDB" id="5MLD"/>
    </source>
</evidence>
<feature type="chain" id="PRO_0000444475" description="8-demethyl-8-aminoriboflavin-5'-phosphate synthase">
    <location>
        <begin position="1"/>
        <end position="257"/>
    </location>
</feature>
<feature type="binding site" evidence="3 9 10">
    <location>
        <begin position="11"/>
        <end position="13"/>
    </location>
    <ligand>
        <name>FMN</name>
        <dbReference type="ChEBI" id="CHEBI:58210"/>
    </ligand>
</feature>
<feature type="binding site" evidence="3 9 10">
    <location>
        <begin position="19"/>
        <end position="21"/>
    </location>
    <ligand>
        <name>FMN</name>
        <dbReference type="ChEBI" id="CHEBI:58210"/>
    </ligand>
</feature>
<feature type="binding site" evidence="3 9 10">
    <location>
        <begin position="91"/>
        <end position="94"/>
    </location>
    <ligand>
        <name>FMN</name>
        <dbReference type="ChEBI" id="CHEBI:58210"/>
    </ligand>
</feature>
<feature type="binding site" evidence="3 9 10">
    <location>
        <begin position="132"/>
        <end position="136"/>
    </location>
    <ligand>
        <name>FMN</name>
        <dbReference type="ChEBI" id="CHEBI:58210"/>
    </ligand>
</feature>
<feature type="binding site" evidence="3">
    <location>
        <position position="240"/>
    </location>
    <ligand>
        <name>FMN</name>
        <dbReference type="ChEBI" id="CHEBI:58210"/>
    </ligand>
</feature>
<feature type="site" description="Important to position the amino-group donor glutamate" evidence="3">
    <location>
        <position position="13"/>
    </location>
</feature>
<feature type="mutagenesis site" description="Loss of synthase activity due to the absence of substrate binding." evidence="3">
    <original>T</original>
    <variation>A</variation>
    <location>
        <position position="11"/>
    </location>
</feature>
<feature type="mutagenesis site" description="Loss of synthase activity due to the reduced ability to catalyze the introduction of an amino group and predominantly to synthesize 8-demethyl-8-carboxyriboflavin-5'-phosphate (HO2C-RP) intermediate." evidence="3">
    <original>R</original>
    <variation>A</variation>
    <location>
        <position position="13"/>
    </location>
</feature>
<feature type="mutagenesis site" description="Loss of synthase activity due to the absence of substrate binding." evidence="3">
    <original>S</original>
    <variation>A</variation>
    <location>
        <position position="19"/>
    </location>
</feature>
<feature type="mutagenesis site" description="Strong decrease of synthase activity." evidence="3">
    <original>T</original>
    <variation>A</variation>
    <location>
        <position position="21"/>
    </location>
</feature>
<feature type="mutagenesis site" description="Loss of synthase activity." evidence="3">
    <original>Y</original>
    <variation>A</variation>
    <location>
        <position position="53"/>
    </location>
</feature>
<feature type="mutagenesis site" description="Loss of synthase activity due to the absence of substrate binding." evidence="3">
    <original>D</original>
    <variation>A</variation>
    <location>
        <position position="55"/>
    </location>
</feature>
<feature type="mutagenesis site" description="Loss of synthase activity due to the absence of substrate binding." evidence="3">
    <original>N</original>
    <variation>A</variation>
    <location>
        <position position="94"/>
    </location>
</feature>
<feature type="mutagenesis site" description="Loss of synthase activity due to the absence of substrate binding." evidence="3">
    <original>Y</original>
    <variation>A</variation>
    <location>
        <position position="240"/>
    </location>
</feature>
<feature type="strand" evidence="11">
    <location>
        <begin position="4"/>
        <end position="9"/>
    </location>
</feature>
<feature type="helix" evidence="11">
    <location>
        <begin position="20"/>
        <end position="34"/>
    </location>
</feature>
<feature type="strand" evidence="11">
    <location>
        <begin position="38"/>
        <end position="43"/>
    </location>
</feature>
<feature type="helix" evidence="11">
    <location>
        <begin position="44"/>
        <end position="46"/>
    </location>
</feature>
<feature type="helix" evidence="11">
    <location>
        <begin position="62"/>
        <end position="64"/>
    </location>
</feature>
<feature type="turn" evidence="11">
    <location>
        <begin position="65"/>
        <end position="67"/>
    </location>
</feature>
<feature type="helix" evidence="11">
    <location>
        <begin position="72"/>
        <end position="81"/>
    </location>
</feature>
<feature type="strand" evidence="11">
    <location>
        <begin position="83"/>
        <end position="92"/>
    </location>
</feature>
<feature type="helix" evidence="11">
    <location>
        <begin position="98"/>
        <end position="107"/>
    </location>
</feature>
<feature type="turn" evidence="11">
    <location>
        <begin position="115"/>
        <end position="117"/>
    </location>
</feature>
<feature type="turn" evidence="11">
    <location>
        <begin position="121"/>
        <end position="124"/>
    </location>
</feature>
<feature type="strand" evidence="11">
    <location>
        <begin position="125"/>
        <end position="132"/>
    </location>
</feature>
<feature type="strand" evidence="11">
    <location>
        <begin position="134"/>
        <end position="136"/>
    </location>
</feature>
<feature type="helix" evidence="11">
    <location>
        <begin position="138"/>
        <end position="152"/>
    </location>
</feature>
<feature type="strand" evidence="11">
    <location>
        <begin position="154"/>
        <end position="156"/>
    </location>
</feature>
<feature type="strand" evidence="11">
    <location>
        <begin position="161"/>
        <end position="164"/>
    </location>
</feature>
<feature type="strand" evidence="11">
    <location>
        <begin position="167"/>
        <end position="170"/>
    </location>
</feature>
<feature type="turn" evidence="11">
    <location>
        <begin position="174"/>
        <end position="178"/>
    </location>
</feature>
<feature type="helix" evidence="11">
    <location>
        <begin position="179"/>
        <end position="181"/>
    </location>
</feature>
<feature type="helix" evidence="11">
    <location>
        <begin position="183"/>
        <end position="205"/>
    </location>
</feature>
<feature type="helix" evidence="11">
    <location>
        <begin position="212"/>
        <end position="220"/>
    </location>
</feature>
<feature type="strand" evidence="11">
    <location>
        <begin position="223"/>
        <end position="230"/>
    </location>
</feature>
<proteinExistence type="evidence at protein level"/>
<comment type="function">
    <text evidence="1 2 3">Involved in the biosynthesis of the riboflavin analog antibiotic roseoflavin (3,8-dimethylamino-riboflavin) (PubMed:27062037). Catalyzes the site-specific substitution of the C-8 methyl group of riboflavin-5'-phosphate (FMN) by an amino group to yield 8-amino-8-demethylriboflavin 5'-phosphate, via a combined oxidation, decarboxylation and transamination reaction (PubMed:27062037, PubMed:27331868, PubMed:27981706). The catalysis is initiated by an oxidation step in which the C-8 methyl group on the dimethylbenzene ring of FMN is converted to a formyl group to yield the 8-demethyl-8-formylriboflavin-5'-phosphate (OHC-RP) intermediate (PubMed:27062037). In the presence of thiamine, the formyl group is oxidized into a carboxyl group to yield the 8-demethyl-8-carboxyriboflavin-5'-phosphate (HO2C-RP) intermediate (PubMed:27062037). Finally, in the presence of L-glutamate as an amino donor, decarboxylation and aminotransfer occur, resulting in production of 8-demethyl-8-aminoriboflavin-5'-phosphate (PubMed:27062037). Addition of NAD (but not NADP) to the reaction increases the yield 1.7-fold (PubMed:27062037). The reaction also proceeds without the addition of any electron acceptor, and it is possible that molecular oxygen serves this role (PubMed:27062037).</text>
</comment>
<comment type="catalytic activity">
    <reaction evidence="1 3 7">
        <text>FMN + L-glutamate + 3 A + O2 + H2O = 8-amino-8-demethylriboflavin 5'-phosphate + 2-oxoglutarate + 3 AH2 + CO2 + H(+)</text>
        <dbReference type="Rhea" id="RHEA:54992"/>
        <dbReference type="ChEBI" id="CHEBI:13193"/>
        <dbReference type="ChEBI" id="CHEBI:15377"/>
        <dbReference type="ChEBI" id="CHEBI:15378"/>
        <dbReference type="ChEBI" id="CHEBI:15379"/>
        <dbReference type="ChEBI" id="CHEBI:16526"/>
        <dbReference type="ChEBI" id="CHEBI:16810"/>
        <dbReference type="ChEBI" id="CHEBI:17499"/>
        <dbReference type="ChEBI" id="CHEBI:29985"/>
        <dbReference type="ChEBI" id="CHEBI:58210"/>
        <dbReference type="ChEBI" id="CHEBI:139569"/>
        <dbReference type="EC" id="2.6.1.114"/>
    </reaction>
</comment>
<comment type="pathway">
    <text evidence="1">Antibiotic biosynthesis.</text>
</comment>
<comment type="subunit">
    <text evidence="1 3">Homotetramer.</text>
</comment>
<comment type="disruption phenotype">
    <text evidence="1">Cells lacking this gene are unable to produce 8-demethyl-8-aminoriboflavin (AF).</text>
</comment>
<comment type="similarity">
    <text evidence="6">Belongs to the SsuE family.</text>
</comment>
<reference key="1">
    <citation type="journal article" date="2012" name="J. Bacteriol.">
        <title>Genome sequence of the bacterium Streptomyces davawensis JCM 4913 and heterologous production of the unique antibiotic roseoflavin.</title>
        <authorList>
            <person name="Jankowitsch F."/>
            <person name="Schwarz J."/>
            <person name="Ruckert C."/>
            <person name="Gust B."/>
            <person name="Szczepanowski R."/>
            <person name="Blom J."/>
            <person name="Pelzer S."/>
            <person name="Kalinowski J."/>
            <person name="Mack M."/>
        </authorList>
    </citation>
    <scope>NUCLEOTIDE SEQUENCE [LARGE SCALE GENOMIC DNA]</scope>
    <source>
        <strain>DSM 101723 / JCM 4913 / KCC S-0913 / 768</strain>
    </source>
</reference>
<reference key="2">
    <citation type="journal article" date="2016" name="Angew. Chem. Int. Ed.">
        <title>Identification of the Key enzyme of roseoflavin biosynthesis.</title>
        <authorList>
            <person name="Schwarz J."/>
            <person name="Konjik V."/>
            <person name="Jankowitsch F."/>
            <person name="Sandhoff R."/>
            <person name="Mack M."/>
        </authorList>
    </citation>
    <scope>FUNCTION</scope>
    <scope>CATALYTIC ACTIVITY</scope>
    <scope>DISRUPTION PHENOTYPE</scope>
    <scope>PATHWAY</scope>
    <scope>SUBUNIT</scope>
    <scope>REACTION MECHANISM</scope>
    <source>
        <strain>DSM 101723 / JCM 4913 / KCC S-0913 / 768</strain>
    </source>
</reference>
<reference key="3">
    <citation type="journal article" date="2016" name="J. Am. Chem. Soc.">
        <title>A remarkable oxidative cascade that replaces the riboflavin C8 methyl with an amino group during roseoflavin biosynthesis.</title>
        <authorList>
            <person name="Jhulki I."/>
            <person name="Chanani P.K."/>
            <person name="Abdelwahed S.H."/>
            <person name="Begley T.P."/>
        </authorList>
    </citation>
    <scope>FUNCTION</scope>
    <scope>CATALYTIC ACTIVITY</scope>
    <source>
        <strain>DSM 101723 / JCM 4913 / KCC S-0913 / 768</strain>
    </source>
</reference>
<reference key="4">
    <citation type="journal article" date="2017" name="Angew. Chem. Int. Ed.">
        <title>The crystal structure of RosB: insights into the reaction mechanism of the first member of a family of flavodoxin-like enzymes.</title>
        <authorList>
            <person name="Konjik V."/>
            <person name="Brunle S."/>
            <person name="Demmer U."/>
            <person name="Vanselow A."/>
            <person name="Sandhoff R."/>
            <person name="Ermler U."/>
            <person name="Mack M."/>
        </authorList>
    </citation>
    <scope>X-RAY CRYSTALLOGRAPHY (1.70 ANGSTROMS) IN COMPLEX WITH SUBSTRATE ANALOG</scope>
    <scope>FUNCTION</scope>
    <scope>CATALYTIC ACTIVITY</scope>
    <scope>MUTAGENESIS OF THR-11; ARG-13; SER-19; THR-21; ASN-94 AND TYR-240</scope>
    <scope>SUBUNIT</scope>
    <scope>REACTION MECHANISM</scope>
    <source>
        <strain>DSM 101723 / JCM 4913 / KCC S-0913 / 768</strain>
    </source>
</reference>
<keyword id="KW-0002">3D-structure</keyword>
<keyword id="KW-0045">Antibiotic biosynthesis</keyword>
<keyword id="KW-0285">Flavoprotein</keyword>
<keyword id="KW-0288">FMN</keyword>
<keyword id="KW-1185">Reference proteome</keyword>
<keyword id="KW-0808">Transferase</keyword>
<sequence>MALKALILNTTLRRSPSRSQTQGLIDKAVPLYEKEGIETEVVRVIDHDIEQEYWDDYDDWNAGEKARREDEWPWLLEKIREADILVIATPITLNMCTSAAHVILEKLNLMDELNGDTKQFPLYNKVAGLLMCGNEDGAHHVAGTVLNNLGRLGYSVPPNAAAYWLGPAGTGPGYIEGKGDRHFHTNKLIRFMVANTSHLARMLQETPYTTDLEACAQAAREESDDVFAIRVNVNTPAIRYKRFQKLGEVKVEESQLG</sequence>
<organism>
    <name type="scientific">Streptomyces davaonensis (strain DSM 101723 / JCM 4913 / KCC S-0913 / 768)</name>
    <dbReference type="NCBI Taxonomy" id="1214101"/>
    <lineage>
        <taxon>Bacteria</taxon>
        <taxon>Bacillati</taxon>
        <taxon>Actinomycetota</taxon>
        <taxon>Actinomycetes</taxon>
        <taxon>Kitasatosporales</taxon>
        <taxon>Streptomycetaceae</taxon>
        <taxon>Streptomyces</taxon>
    </lineage>
</organism>
<name>ROSB_STRDJ</name>
<dbReference type="EC" id="2.6.1.114" evidence="1 3 7"/>
<dbReference type="EMBL" id="HE971709">
    <property type="protein sequence ID" value="CCK32368.1"/>
    <property type="molecule type" value="Genomic_DNA"/>
</dbReference>
<dbReference type="RefSeq" id="WP_015662694.1">
    <property type="nucleotide sequence ID" value="NC_020504.1"/>
</dbReference>
<dbReference type="PDB" id="5MJI">
    <property type="method" value="X-ray"/>
    <property type="resolution" value="2.00 A"/>
    <property type="chains" value="A=1-257"/>
</dbReference>
<dbReference type="PDB" id="5MLD">
    <property type="method" value="X-ray"/>
    <property type="resolution" value="1.70 A"/>
    <property type="chains" value="A/B/C/D/E/F/G/H=1-257"/>
</dbReference>
<dbReference type="PDBsum" id="5MJI"/>
<dbReference type="PDBsum" id="5MLD"/>
<dbReference type="SMR" id="K4REZ6"/>
<dbReference type="STRING" id="1214101.BN159_7989"/>
<dbReference type="KEGG" id="sdv:BN159_7989"/>
<dbReference type="PATRIC" id="fig|1214101.3.peg.8085"/>
<dbReference type="eggNOG" id="COG0655">
    <property type="taxonomic scope" value="Bacteria"/>
</dbReference>
<dbReference type="HOGENOM" id="CLU_082329_0_0_11"/>
<dbReference type="OrthoDB" id="8853249at2"/>
<dbReference type="BioCyc" id="MetaCyc:BN159_RS39585-MONOMER"/>
<dbReference type="BRENDA" id="2.6.1.114">
    <property type="organism ID" value="9909"/>
</dbReference>
<dbReference type="Proteomes" id="UP000008043">
    <property type="component" value="Chromosome"/>
</dbReference>
<dbReference type="GO" id="GO:0016491">
    <property type="term" value="F:oxidoreductase activity"/>
    <property type="evidence" value="ECO:0007669"/>
    <property type="project" value="InterPro"/>
</dbReference>
<dbReference type="GO" id="GO:0008483">
    <property type="term" value="F:transaminase activity"/>
    <property type="evidence" value="ECO:0000314"/>
    <property type="project" value="UniProtKB"/>
</dbReference>
<dbReference type="GO" id="GO:0017000">
    <property type="term" value="P:antibiotic biosynthetic process"/>
    <property type="evidence" value="ECO:0007669"/>
    <property type="project" value="UniProtKB-KW"/>
</dbReference>
<dbReference type="GO" id="GO:0016999">
    <property type="term" value="P:antibiotic metabolic process"/>
    <property type="evidence" value="ECO:0000314"/>
    <property type="project" value="UniProtKB"/>
</dbReference>
<dbReference type="Gene3D" id="3.40.50.360">
    <property type="match status" value="1"/>
</dbReference>
<dbReference type="InterPro" id="IPR029039">
    <property type="entry name" value="Flavoprotein-like_sf"/>
</dbReference>
<dbReference type="InterPro" id="IPR005025">
    <property type="entry name" value="FMN_Rdtase-like_dom"/>
</dbReference>
<dbReference type="Pfam" id="PF03358">
    <property type="entry name" value="FMN_red"/>
    <property type="match status" value="1"/>
</dbReference>
<dbReference type="SUPFAM" id="SSF52218">
    <property type="entry name" value="Flavoproteins"/>
    <property type="match status" value="1"/>
</dbReference>